<evidence type="ECO:0000250" key="1"/>
<evidence type="ECO:0000250" key="2">
    <source>
        <dbReference type="UniProtKB" id="P04040"/>
    </source>
</evidence>
<evidence type="ECO:0000255" key="3">
    <source>
        <dbReference type="PROSITE-ProRule" id="PRU10013"/>
    </source>
</evidence>
<evidence type="ECO:0000256" key="4">
    <source>
        <dbReference type="SAM" id="MobiDB-lite"/>
    </source>
</evidence>
<evidence type="ECO:0000305" key="5"/>
<comment type="function">
    <text evidence="2">Catalyzes the degradation of hydrogen peroxide (H(2)O(2)) generated by peroxisomal oxidases to water and oxygen, thereby protecting cells from the toxic effects of hydrogen peroxide.</text>
</comment>
<comment type="catalytic activity">
    <reaction evidence="3">
        <text>2 H2O2 = O2 + 2 H2O</text>
        <dbReference type="Rhea" id="RHEA:20309"/>
        <dbReference type="ChEBI" id="CHEBI:15377"/>
        <dbReference type="ChEBI" id="CHEBI:15379"/>
        <dbReference type="ChEBI" id="CHEBI:16240"/>
        <dbReference type="EC" id="1.11.1.6"/>
    </reaction>
</comment>
<comment type="cofactor">
    <cofactor evidence="2">
        <name>heme</name>
        <dbReference type="ChEBI" id="CHEBI:30413"/>
    </cofactor>
</comment>
<comment type="cofactor">
    <cofactor evidence="2">
        <name>NADP(+)</name>
        <dbReference type="ChEBI" id="CHEBI:58349"/>
    </cofactor>
</comment>
<comment type="subunit">
    <text evidence="2">Homotetramer.</text>
</comment>
<comment type="subcellular location">
    <subcellularLocation>
        <location evidence="2">Peroxisome matrix</location>
    </subcellularLocation>
</comment>
<comment type="similarity">
    <text evidence="5">Belongs to the catalase family.</text>
</comment>
<gene>
    <name type="primary">cat</name>
</gene>
<name>CATA_GLARU</name>
<protein>
    <recommendedName>
        <fullName>Catalase</fullName>
        <ecNumber evidence="3">1.11.1.6</ecNumber>
    </recommendedName>
</protein>
<accession>Q9PWF7</accession>
<sequence>MADRREKSADQMKLWKESRANQKPDVLTTGGGNPVSDKLNLLTVGPRGPLLVQDVVFTDEMAHFDRERIPERVVHAKGAGAFGYFEVTHDITRYSKAKVFEFIGKRTPIAVRFSTVAGEAGSADTVRDPRGFAVKFYTEDGNWDLTGNNTPIFFVRDAMLFPSFIHSQKRNPQTHMKDPDMVWDFWALRPESLHQVSFLFSDRGIPDGHRHMNGYGSHTFKLVNAKDEPIYCKFHFKTDQGIRNLTVEEANRLSAEDPDYGIHDLYEAIANGNYPSWTFYIQVMTFEQAERYPFNPFDLTKIWPHKDYPLIPVGKLVLNRNPANYFAEVEQIAFDPSNMPPGIEPSPDKMLQGRLFSYPDTHRHRLGANYLQLPVNCPYKARVANYQRDGPMCFSDNQGGAPNYFPNSFSAPENQPAARESKFRVSADVARYNSSDDDNVSQVRDFYTKVLSEEERKRLCENIAGHLKGAQIFIQKRAVKNFTDVHPDYGNRVQALLDKYNAEGHHKKVIKTYTQHSAHVTANDKANL</sequence>
<reference key="1">
    <citation type="submission" date="1999-08" db="EMBL/GenBank/DDBJ databases">
        <title>cDNA sequence of Rana rugosa liver catalase.</title>
        <authorList>
            <person name="Kubo H."/>
            <person name="Kashiwagi A."/>
        </authorList>
    </citation>
    <scope>NUCLEOTIDE SEQUENCE [MRNA]</scope>
    <source>
        <tissue>Liver</tissue>
    </source>
</reference>
<keyword id="KW-0349">Heme</keyword>
<keyword id="KW-0376">Hydrogen peroxide</keyword>
<keyword id="KW-0408">Iron</keyword>
<keyword id="KW-0479">Metal-binding</keyword>
<keyword id="KW-0521">NADP</keyword>
<keyword id="KW-0560">Oxidoreductase</keyword>
<keyword id="KW-0575">Peroxidase</keyword>
<keyword id="KW-0576">Peroxisome</keyword>
<organism>
    <name type="scientific">Glandirana rugosa</name>
    <name type="common">Japanese wrinkled frog</name>
    <name type="synonym">Rana rugosa</name>
    <dbReference type="NCBI Taxonomy" id="8410"/>
    <lineage>
        <taxon>Eukaryota</taxon>
        <taxon>Metazoa</taxon>
        <taxon>Chordata</taxon>
        <taxon>Craniata</taxon>
        <taxon>Vertebrata</taxon>
        <taxon>Euteleostomi</taxon>
        <taxon>Amphibia</taxon>
        <taxon>Batrachia</taxon>
        <taxon>Anura</taxon>
        <taxon>Neobatrachia</taxon>
        <taxon>Ranoidea</taxon>
        <taxon>Ranidae</taxon>
        <taxon>Glandirana</taxon>
    </lineage>
</organism>
<feature type="initiator methionine" description="Removed" evidence="1">
    <location>
        <position position="1"/>
    </location>
</feature>
<feature type="chain" id="PRO_0000084907" description="Catalase">
    <location>
        <begin position="2"/>
        <end position="528"/>
    </location>
</feature>
<feature type="region of interest" description="Disordered" evidence="4">
    <location>
        <begin position="1"/>
        <end position="32"/>
    </location>
</feature>
<feature type="short sequence motif" description="Microbody targeting signal; atypical" evidence="2">
    <location>
        <begin position="525"/>
        <end position="528"/>
    </location>
</feature>
<feature type="compositionally biased region" description="Basic and acidic residues" evidence="4">
    <location>
        <begin position="1"/>
        <end position="22"/>
    </location>
</feature>
<feature type="active site" evidence="3">
    <location>
        <position position="75"/>
    </location>
</feature>
<feature type="active site" evidence="3">
    <location>
        <position position="148"/>
    </location>
</feature>
<feature type="binding site" evidence="2">
    <location>
        <position position="194"/>
    </location>
    <ligand>
        <name>NADP(+)</name>
        <dbReference type="ChEBI" id="CHEBI:58349"/>
    </ligand>
</feature>
<feature type="binding site" evidence="2">
    <location>
        <position position="201"/>
    </location>
    <ligand>
        <name>NADP(+)</name>
        <dbReference type="ChEBI" id="CHEBI:58349"/>
    </ligand>
</feature>
<feature type="binding site" evidence="2">
    <location>
        <position position="203"/>
    </location>
    <ligand>
        <name>NADP(+)</name>
        <dbReference type="ChEBI" id="CHEBI:58349"/>
    </ligand>
</feature>
<feature type="binding site" evidence="2">
    <location>
        <position position="213"/>
    </location>
    <ligand>
        <name>NADP(+)</name>
        <dbReference type="ChEBI" id="CHEBI:58349"/>
    </ligand>
</feature>
<feature type="binding site" evidence="2">
    <location>
        <position position="237"/>
    </location>
    <ligand>
        <name>NADP(+)</name>
        <dbReference type="ChEBI" id="CHEBI:58349"/>
    </ligand>
</feature>
<feature type="binding site" evidence="2">
    <location>
        <position position="303"/>
    </location>
    <ligand>
        <name>NADP(+)</name>
        <dbReference type="ChEBI" id="CHEBI:58349"/>
    </ligand>
</feature>
<feature type="binding site" evidence="2">
    <location>
        <position position="305"/>
    </location>
    <ligand>
        <name>NADP(+)</name>
        <dbReference type="ChEBI" id="CHEBI:58349"/>
    </ligand>
</feature>
<feature type="binding site" evidence="2">
    <location>
        <position position="306"/>
    </location>
    <ligand>
        <name>NADP(+)</name>
        <dbReference type="ChEBI" id="CHEBI:58349"/>
    </ligand>
</feature>
<feature type="binding site" description="axial binding residue" evidence="2">
    <location>
        <position position="358"/>
    </location>
    <ligand>
        <name>heme</name>
        <dbReference type="ChEBI" id="CHEBI:30413"/>
    </ligand>
    <ligandPart>
        <name>Fe</name>
        <dbReference type="ChEBI" id="CHEBI:18248"/>
    </ligandPart>
</feature>
<dbReference type="EC" id="1.11.1.6" evidence="3"/>
<dbReference type="EMBL" id="AB031872">
    <property type="protein sequence ID" value="BAA83685.1"/>
    <property type="molecule type" value="mRNA"/>
</dbReference>
<dbReference type="SMR" id="Q9PWF7"/>
<dbReference type="PeroxiBase" id="5274">
    <property type="entry name" value="RrugKat01"/>
</dbReference>
<dbReference type="GO" id="GO:0005739">
    <property type="term" value="C:mitochondrion"/>
    <property type="evidence" value="ECO:0007669"/>
    <property type="project" value="TreeGrafter"/>
</dbReference>
<dbReference type="GO" id="GO:0005782">
    <property type="term" value="C:peroxisomal matrix"/>
    <property type="evidence" value="ECO:0007669"/>
    <property type="project" value="UniProtKB-SubCell"/>
</dbReference>
<dbReference type="GO" id="GO:0004096">
    <property type="term" value="F:catalase activity"/>
    <property type="evidence" value="ECO:0007669"/>
    <property type="project" value="UniProtKB-EC"/>
</dbReference>
<dbReference type="GO" id="GO:0020037">
    <property type="term" value="F:heme binding"/>
    <property type="evidence" value="ECO:0007669"/>
    <property type="project" value="InterPro"/>
</dbReference>
<dbReference type="GO" id="GO:0046872">
    <property type="term" value="F:metal ion binding"/>
    <property type="evidence" value="ECO:0007669"/>
    <property type="project" value="UniProtKB-KW"/>
</dbReference>
<dbReference type="GO" id="GO:0042744">
    <property type="term" value="P:hydrogen peroxide catabolic process"/>
    <property type="evidence" value="ECO:0007669"/>
    <property type="project" value="UniProtKB-KW"/>
</dbReference>
<dbReference type="GO" id="GO:0042542">
    <property type="term" value="P:response to hydrogen peroxide"/>
    <property type="evidence" value="ECO:0007669"/>
    <property type="project" value="TreeGrafter"/>
</dbReference>
<dbReference type="CDD" id="cd08156">
    <property type="entry name" value="catalase_clade_3"/>
    <property type="match status" value="1"/>
</dbReference>
<dbReference type="FunFam" id="2.40.180.10:FF:000001">
    <property type="entry name" value="Catalase"/>
    <property type="match status" value="1"/>
</dbReference>
<dbReference type="Gene3D" id="2.40.180.10">
    <property type="entry name" value="Catalase core domain"/>
    <property type="match status" value="1"/>
</dbReference>
<dbReference type="InterPro" id="IPR018028">
    <property type="entry name" value="Catalase"/>
</dbReference>
<dbReference type="InterPro" id="IPR040333">
    <property type="entry name" value="Catalase_3"/>
</dbReference>
<dbReference type="InterPro" id="IPR024708">
    <property type="entry name" value="Catalase_AS"/>
</dbReference>
<dbReference type="InterPro" id="IPR024711">
    <property type="entry name" value="Catalase_clade1/3"/>
</dbReference>
<dbReference type="InterPro" id="IPR011614">
    <property type="entry name" value="Catalase_core"/>
</dbReference>
<dbReference type="InterPro" id="IPR002226">
    <property type="entry name" value="Catalase_haem_BS"/>
</dbReference>
<dbReference type="InterPro" id="IPR010582">
    <property type="entry name" value="Catalase_immune_responsive"/>
</dbReference>
<dbReference type="InterPro" id="IPR020835">
    <property type="entry name" value="Catalase_sf"/>
</dbReference>
<dbReference type="PANTHER" id="PTHR11465">
    <property type="entry name" value="CATALASE"/>
    <property type="match status" value="1"/>
</dbReference>
<dbReference type="PANTHER" id="PTHR11465:SF66">
    <property type="entry name" value="CATALASE"/>
    <property type="match status" value="1"/>
</dbReference>
<dbReference type="Pfam" id="PF00199">
    <property type="entry name" value="Catalase"/>
    <property type="match status" value="1"/>
</dbReference>
<dbReference type="Pfam" id="PF06628">
    <property type="entry name" value="Catalase-rel"/>
    <property type="match status" value="1"/>
</dbReference>
<dbReference type="PIRSF" id="PIRSF038928">
    <property type="entry name" value="Catalase_clade1-3"/>
    <property type="match status" value="1"/>
</dbReference>
<dbReference type="PRINTS" id="PR00067">
    <property type="entry name" value="CATALASE"/>
</dbReference>
<dbReference type="SMART" id="SM01060">
    <property type="entry name" value="Catalase"/>
    <property type="match status" value="1"/>
</dbReference>
<dbReference type="SUPFAM" id="SSF56634">
    <property type="entry name" value="Heme-dependent catalase-like"/>
    <property type="match status" value="1"/>
</dbReference>
<dbReference type="PROSITE" id="PS00437">
    <property type="entry name" value="CATALASE_1"/>
    <property type="match status" value="1"/>
</dbReference>
<dbReference type="PROSITE" id="PS00438">
    <property type="entry name" value="CATALASE_2"/>
    <property type="match status" value="1"/>
</dbReference>
<dbReference type="PROSITE" id="PS51402">
    <property type="entry name" value="CATALASE_3"/>
    <property type="match status" value="1"/>
</dbReference>
<proteinExistence type="evidence at transcript level"/>